<organism>
    <name type="scientific">Bdellovibrio bacteriovorus (strain ATCC 15356 / DSM 50701 / NCIMB 9529 / HD100)</name>
    <dbReference type="NCBI Taxonomy" id="264462"/>
    <lineage>
        <taxon>Bacteria</taxon>
        <taxon>Pseudomonadati</taxon>
        <taxon>Bdellovibrionota</taxon>
        <taxon>Bdellovibrionia</taxon>
        <taxon>Bdellovibrionales</taxon>
        <taxon>Pseudobdellovibrionaceae</taxon>
        <taxon>Bdellovibrio</taxon>
    </lineage>
</organism>
<proteinExistence type="inferred from homology"/>
<feature type="chain" id="PRO_0000198093" description="Ribosomal RNA large subunit methyltransferase H">
    <location>
        <begin position="1"/>
        <end position="156"/>
    </location>
</feature>
<feature type="binding site" evidence="1">
    <location>
        <position position="104"/>
    </location>
    <ligand>
        <name>S-adenosyl-L-methionine</name>
        <dbReference type="ChEBI" id="CHEBI:59789"/>
    </ligand>
</feature>
<feature type="binding site" evidence="1">
    <location>
        <begin position="123"/>
        <end position="128"/>
    </location>
    <ligand>
        <name>S-adenosyl-L-methionine</name>
        <dbReference type="ChEBI" id="CHEBI:59789"/>
    </ligand>
</feature>
<dbReference type="EC" id="2.1.1.177" evidence="1"/>
<dbReference type="EMBL" id="BX842656">
    <property type="protein sequence ID" value="CAE81202.1"/>
    <property type="molecule type" value="Genomic_DNA"/>
</dbReference>
<dbReference type="RefSeq" id="WP_011166145.1">
    <property type="nucleotide sequence ID" value="NC_005363.1"/>
</dbReference>
<dbReference type="SMR" id="Q6MGS7"/>
<dbReference type="STRING" id="264462.Bd3845"/>
<dbReference type="GeneID" id="93014614"/>
<dbReference type="KEGG" id="bba:Bd3845"/>
<dbReference type="eggNOG" id="COG1576">
    <property type="taxonomic scope" value="Bacteria"/>
</dbReference>
<dbReference type="HOGENOM" id="CLU_100552_2_0_7"/>
<dbReference type="Proteomes" id="UP000008080">
    <property type="component" value="Chromosome"/>
</dbReference>
<dbReference type="GO" id="GO:0005737">
    <property type="term" value="C:cytoplasm"/>
    <property type="evidence" value="ECO:0007669"/>
    <property type="project" value="UniProtKB-SubCell"/>
</dbReference>
<dbReference type="GO" id="GO:0070038">
    <property type="term" value="F:rRNA (pseudouridine-N3-)-methyltransferase activity"/>
    <property type="evidence" value="ECO:0007669"/>
    <property type="project" value="UniProtKB-UniRule"/>
</dbReference>
<dbReference type="CDD" id="cd18081">
    <property type="entry name" value="RlmH-like"/>
    <property type="match status" value="1"/>
</dbReference>
<dbReference type="Gene3D" id="3.40.1280.10">
    <property type="match status" value="1"/>
</dbReference>
<dbReference type="HAMAP" id="MF_00658">
    <property type="entry name" value="23SrRNA_methyltr_H"/>
    <property type="match status" value="1"/>
</dbReference>
<dbReference type="InterPro" id="IPR029028">
    <property type="entry name" value="Alpha/beta_knot_MTases"/>
</dbReference>
<dbReference type="InterPro" id="IPR003742">
    <property type="entry name" value="RlmH-like"/>
</dbReference>
<dbReference type="InterPro" id="IPR029026">
    <property type="entry name" value="tRNA_m1G_MTases_N"/>
</dbReference>
<dbReference type="PANTHER" id="PTHR33603">
    <property type="entry name" value="METHYLTRANSFERASE"/>
    <property type="match status" value="1"/>
</dbReference>
<dbReference type="PANTHER" id="PTHR33603:SF1">
    <property type="entry name" value="RIBOSOMAL RNA LARGE SUBUNIT METHYLTRANSFERASE H"/>
    <property type="match status" value="1"/>
</dbReference>
<dbReference type="Pfam" id="PF02590">
    <property type="entry name" value="SPOUT_MTase"/>
    <property type="match status" value="1"/>
</dbReference>
<dbReference type="PIRSF" id="PIRSF004505">
    <property type="entry name" value="MT_bac"/>
    <property type="match status" value="1"/>
</dbReference>
<dbReference type="SUPFAM" id="SSF75217">
    <property type="entry name" value="alpha/beta knot"/>
    <property type="match status" value="1"/>
</dbReference>
<protein>
    <recommendedName>
        <fullName evidence="1">Ribosomal RNA large subunit methyltransferase H</fullName>
        <ecNumber evidence="1">2.1.1.177</ecNumber>
    </recommendedName>
    <alternativeName>
        <fullName evidence="1">23S rRNA (pseudouridine1915-N3)-methyltransferase</fullName>
    </alternativeName>
    <alternativeName>
        <fullName evidence="1">23S rRNA m3Psi1915 methyltransferase</fullName>
    </alternativeName>
    <alternativeName>
        <fullName evidence="1">rRNA (pseudouridine-N3-)-methyltransferase RlmH</fullName>
    </alternativeName>
</protein>
<evidence type="ECO:0000255" key="1">
    <source>
        <dbReference type="HAMAP-Rule" id="MF_00658"/>
    </source>
</evidence>
<sequence>MKFILYNLATAKEPWADEVSELYKKKISFFIPFDIQSLKAKKSAREDADFKRNEESELILKNINSDDYVVLFDERGSVLDSIQFSKKVENILGSSKKRAIFIIGGAFGVNEEVRKRADLKVALSPMVMNHLMAQAMSLEQIYRAFTIIKKIPYHNI</sequence>
<name>RLMH_BDEBA</name>
<gene>
    <name evidence="1" type="primary">rlmH</name>
    <name type="ordered locus">Bd3845</name>
</gene>
<keyword id="KW-0963">Cytoplasm</keyword>
<keyword id="KW-0489">Methyltransferase</keyword>
<keyword id="KW-1185">Reference proteome</keyword>
<keyword id="KW-0698">rRNA processing</keyword>
<keyword id="KW-0949">S-adenosyl-L-methionine</keyword>
<keyword id="KW-0808">Transferase</keyword>
<accession>Q6MGS7</accession>
<reference key="1">
    <citation type="journal article" date="2004" name="Science">
        <title>A predator unmasked: life cycle of Bdellovibrio bacteriovorus from a genomic perspective.</title>
        <authorList>
            <person name="Rendulic S."/>
            <person name="Jagtap P."/>
            <person name="Rosinus A."/>
            <person name="Eppinger M."/>
            <person name="Baar C."/>
            <person name="Lanz C."/>
            <person name="Keller H."/>
            <person name="Lambert C."/>
            <person name="Evans K.J."/>
            <person name="Goesmann A."/>
            <person name="Meyer F."/>
            <person name="Sockett R.E."/>
            <person name="Schuster S.C."/>
        </authorList>
    </citation>
    <scope>NUCLEOTIDE SEQUENCE [LARGE SCALE GENOMIC DNA]</scope>
    <source>
        <strain>ATCC 15356 / DSM 50701 / NCIMB 9529 / HD100</strain>
    </source>
</reference>
<comment type="function">
    <text evidence="1">Specifically methylates the pseudouridine at position 1915 (m3Psi1915) in 23S rRNA.</text>
</comment>
<comment type="catalytic activity">
    <reaction evidence="1">
        <text>pseudouridine(1915) in 23S rRNA + S-adenosyl-L-methionine = N(3)-methylpseudouridine(1915) in 23S rRNA + S-adenosyl-L-homocysteine + H(+)</text>
        <dbReference type="Rhea" id="RHEA:42752"/>
        <dbReference type="Rhea" id="RHEA-COMP:10221"/>
        <dbReference type="Rhea" id="RHEA-COMP:10222"/>
        <dbReference type="ChEBI" id="CHEBI:15378"/>
        <dbReference type="ChEBI" id="CHEBI:57856"/>
        <dbReference type="ChEBI" id="CHEBI:59789"/>
        <dbReference type="ChEBI" id="CHEBI:65314"/>
        <dbReference type="ChEBI" id="CHEBI:74486"/>
        <dbReference type="EC" id="2.1.1.177"/>
    </reaction>
</comment>
<comment type="subunit">
    <text evidence="1">Homodimer.</text>
</comment>
<comment type="subcellular location">
    <subcellularLocation>
        <location evidence="1">Cytoplasm</location>
    </subcellularLocation>
</comment>
<comment type="similarity">
    <text evidence="1">Belongs to the RNA methyltransferase RlmH family.</text>
</comment>